<reference key="1">
    <citation type="journal article" date="2008" name="J. Bacteriol.">
        <title>The complete genome sequence of Escherichia coli DH10B: insights into the biology of a laboratory workhorse.</title>
        <authorList>
            <person name="Durfee T."/>
            <person name="Nelson R."/>
            <person name="Baldwin S."/>
            <person name="Plunkett G. III"/>
            <person name="Burland V."/>
            <person name="Mau B."/>
            <person name="Petrosino J.F."/>
            <person name="Qin X."/>
            <person name="Muzny D.M."/>
            <person name="Ayele M."/>
            <person name="Gibbs R.A."/>
            <person name="Csorgo B."/>
            <person name="Posfai G."/>
            <person name="Weinstock G.M."/>
            <person name="Blattner F.R."/>
        </authorList>
    </citation>
    <scope>NUCLEOTIDE SEQUENCE [LARGE SCALE GENOMIC DNA]</scope>
    <source>
        <strain>K12 / DH10B</strain>
    </source>
</reference>
<name>EFG_ECODH</name>
<comment type="function">
    <text evidence="2">Catalyzes the GTP-dependent ribosomal translocation step during translation elongation. During this step, the ribosome changes from the pre-translocational (PRE) to the post-translocational (POST) state as the newly formed A-site-bound peptidyl-tRNA and P-site-bound deacylated tRNA move to the P and E sites, respectively. Catalyzes the coordinated movement of the two tRNA molecules, the mRNA and conformational changes in the ribosome.</text>
</comment>
<comment type="subcellular location">
    <subcellularLocation>
        <location evidence="2">Cytoplasm</location>
    </subcellularLocation>
</comment>
<comment type="similarity">
    <text evidence="2">Belongs to the TRAFAC class translation factor GTPase superfamily. Classic translation factor GTPase family. EF-G/EF-2 subfamily.</text>
</comment>
<feature type="chain" id="PRO_1000091708" description="Elongation factor G">
    <location>
        <begin position="1"/>
        <end position="704"/>
    </location>
</feature>
<feature type="domain" description="tr-type G">
    <location>
        <begin position="8"/>
        <end position="290"/>
    </location>
</feature>
<feature type="binding site" evidence="2">
    <location>
        <begin position="17"/>
        <end position="24"/>
    </location>
    <ligand>
        <name>GTP</name>
        <dbReference type="ChEBI" id="CHEBI:37565"/>
    </ligand>
</feature>
<feature type="binding site" evidence="2">
    <location>
        <begin position="88"/>
        <end position="92"/>
    </location>
    <ligand>
        <name>GTP</name>
        <dbReference type="ChEBI" id="CHEBI:37565"/>
    </ligand>
</feature>
<feature type="binding site" evidence="2">
    <location>
        <begin position="142"/>
        <end position="145"/>
    </location>
    <ligand>
        <name>GTP</name>
        <dbReference type="ChEBI" id="CHEBI:37565"/>
    </ligand>
</feature>
<feature type="modified residue" description="N6-acetyllysine" evidence="1">
    <location>
        <position position="504"/>
    </location>
</feature>
<feature type="modified residue" description="N6-acetyllysine" evidence="1">
    <location>
        <position position="643"/>
    </location>
</feature>
<proteinExistence type="inferred from homology"/>
<organism>
    <name type="scientific">Escherichia coli (strain K12 / DH10B)</name>
    <dbReference type="NCBI Taxonomy" id="316385"/>
    <lineage>
        <taxon>Bacteria</taxon>
        <taxon>Pseudomonadati</taxon>
        <taxon>Pseudomonadota</taxon>
        <taxon>Gammaproteobacteria</taxon>
        <taxon>Enterobacterales</taxon>
        <taxon>Enterobacteriaceae</taxon>
        <taxon>Escherichia</taxon>
    </lineage>
</organism>
<keyword id="KW-0007">Acetylation</keyword>
<keyword id="KW-0963">Cytoplasm</keyword>
<keyword id="KW-0251">Elongation factor</keyword>
<keyword id="KW-0342">GTP-binding</keyword>
<keyword id="KW-0547">Nucleotide-binding</keyword>
<keyword id="KW-0648">Protein biosynthesis</keyword>
<evidence type="ECO:0000250" key="1"/>
<evidence type="ECO:0000255" key="2">
    <source>
        <dbReference type="HAMAP-Rule" id="MF_00054"/>
    </source>
</evidence>
<dbReference type="EMBL" id="CP000948">
    <property type="protein sequence ID" value="ACB04400.1"/>
    <property type="molecule type" value="Genomic_DNA"/>
</dbReference>
<dbReference type="RefSeq" id="WP_000124700.1">
    <property type="nucleotide sequence ID" value="NC_010473.1"/>
</dbReference>
<dbReference type="SMR" id="B1X6J0"/>
<dbReference type="GeneID" id="93778658"/>
<dbReference type="KEGG" id="ecd:ECDH10B_3515"/>
<dbReference type="HOGENOM" id="CLU_002794_4_1_6"/>
<dbReference type="GO" id="GO:0005737">
    <property type="term" value="C:cytoplasm"/>
    <property type="evidence" value="ECO:0007669"/>
    <property type="project" value="UniProtKB-SubCell"/>
</dbReference>
<dbReference type="GO" id="GO:0005525">
    <property type="term" value="F:GTP binding"/>
    <property type="evidence" value="ECO:0007669"/>
    <property type="project" value="UniProtKB-UniRule"/>
</dbReference>
<dbReference type="GO" id="GO:0003924">
    <property type="term" value="F:GTPase activity"/>
    <property type="evidence" value="ECO:0007669"/>
    <property type="project" value="InterPro"/>
</dbReference>
<dbReference type="GO" id="GO:0097216">
    <property type="term" value="F:guanosine tetraphosphate binding"/>
    <property type="evidence" value="ECO:0007669"/>
    <property type="project" value="UniProtKB-ARBA"/>
</dbReference>
<dbReference type="GO" id="GO:0003746">
    <property type="term" value="F:translation elongation factor activity"/>
    <property type="evidence" value="ECO:0007669"/>
    <property type="project" value="UniProtKB-UniRule"/>
</dbReference>
<dbReference type="GO" id="GO:0032790">
    <property type="term" value="P:ribosome disassembly"/>
    <property type="evidence" value="ECO:0007669"/>
    <property type="project" value="TreeGrafter"/>
</dbReference>
<dbReference type="CDD" id="cd01886">
    <property type="entry name" value="EF-G"/>
    <property type="match status" value="1"/>
</dbReference>
<dbReference type="CDD" id="cd16262">
    <property type="entry name" value="EFG_III"/>
    <property type="match status" value="1"/>
</dbReference>
<dbReference type="CDD" id="cd01434">
    <property type="entry name" value="EFG_mtEFG1_IV"/>
    <property type="match status" value="1"/>
</dbReference>
<dbReference type="CDD" id="cd03713">
    <property type="entry name" value="EFG_mtEFG_C"/>
    <property type="match status" value="1"/>
</dbReference>
<dbReference type="CDD" id="cd04088">
    <property type="entry name" value="EFG_mtEFG_II"/>
    <property type="match status" value="1"/>
</dbReference>
<dbReference type="FunFam" id="2.40.30.10:FF:000006">
    <property type="entry name" value="Elongation factor G"/>
    <property type="match status" value="1"/>
</dbReference>
<dbReference type="FunFam" id="3.30.230.10:FF:000003">
    <property type="entry name" value="Elongation factor G"/>
    <property type="match status" value="1"/>
</dbReference>
<dbReference type="FunFam" id="3.30.70.240:FF:000001">
    <property type="entry name" value="Elongation factor G"/>
    <property type="match status" value="1"/>
</dbReference>
<dbReference type="FunFam" id="3.30.70.870:FF:000001">
    <property type="entry name" value="Elongation factor G"/>
    <property type="match status" value="1"/>
</dbReference>
<dbReference type="FunFam" id="3.40.50.300:FF:000029">
    <property type="entry name" value="Elongation factor G"/>
    <property type="match status" value="1"/>
</dbReference>
<dbReference type="Gene3D" id="3.30.230.10">
    <property type="match status" value="1"/>
</dbReference>
<dbReference type="Gene3D" id="3.30.70.240">
    <property type="match status" value="1"/>
</dbReference>
<dbReference type="Gene3D" id="3.30.70.870">
    <property type="entry name" value="Elongation Factor G (Translational Gtpase), domain 3"/>
    <property type="match status" value="1"/>
</dbReference>
<dbReference type="Gene3D" id="3.40.50.300">
    <property type="entry name" value="P-loop containing nucleotide triphosphate hydrolases"/>
    <property type="match status" value="1"/>
</dbReference>
<dbReference type="Gene3D" id="2.40.30.10">
    <property type="entry name" value="Translation factors"/>
    <property type="match status" value="1"/>
</dbReference>
<dbReference type="HAMAP" id="MF_00054_B">
    <property type="entry name" value="EF_G_EF_2_B"/>
    <property type="match status" value="1"/>
</dbReference>
<dbReference type="InterPro" id="IPR041095">
    <property type="entry name" value="EFG_II"/>
</dbReference>
<dbReference type="InterPro" id="IPR009022">
    <property type="entry name" value="EFG_III"/>
</dbReference>
<dbReference type="InterPro" id="IPR035647">
    <property type="entry name" value="EFG_III/V"/>
</dbReference>
<dbReference type="InterPro" id="IPR047872">
    <property type="entry name" value="EFG_IV"/>
</dbReference>
<dbReference type="InterPro" id="IPR035649">
    <property type="entry name" value="EFG_V"/>
</dbReference>
<dbReference type="InterPro" id="IPR000640">
    <property type="entry name" value="EFG_V-like"/>
</dbReference>
<dbReference type="InterPro" id="IPR004161">
    <property type="entry name" value="EFTu-like_2"/>
</dbReference>
<dbReference type="InterPro" id="IPR031157">
    <property type="entry name" value="G_TR_CS"/>
</dbReference>
<dbReference type="InterPro" id="IPR027417">
    <property type="entry name" value="P-loop_NTPase"/>
</dbReference>
<dbReference type="InterPro" id="IPR020568">
    <property type="entry name" value="Ribosomal_Su5_D2-typ_SF"/>
</dbReference>
<dbReference type="InterPro" id="IPR014721">
    <property type="entry name" value="Ribsml_uS5_D2-typ_fold_subgr"/>
</dbReference>
<dbReference type="InterPro" id="IPR005225">
    <property type="entry name" value="Small_GTP-bd"/>
</dbReference>
<dbReference type="InterPro" id="IPR000795">
    <property type="entry name" value="T_Tr_GTP-bd_dom"/>
</dbReference>
<dbReference type="InterPro" id="IPR009000">
    <property type="entry name" value="Transl_B-barrel_sf"/>
</dbReference>
<dbReference type="InterPro" id="IPR004540">
    <property type="entry name" value="Transl_elong_EFG/EF2"/>
</dbReference>
<dbReference type="InterPro" id="IPR005517">
    <property type="entry name" value="Transl_elong_EFG/EF2_IV"/>
</dbReference>
<dbReference type="NCBIfam" id="TIGR00484">
    <property type="entry name" value="EF-G"/>
    <property type="match status" value="1"/>
</dbReference>
<dbReference type="NCBIfam" id="NF009381">
    <property type="entry name" value="PRK12740.1-5"/>
    <property type="match status" value="1"/>
</dbReference>
<dbReference type="NCBIfam" id="TIGR00231">
    <property type="entry name" value="small_GTP"/>
    <property type="match status" value="1"/>
</dbReference>
<dbReference type="PANTHER" id="PTHR43261:SF1">
    <property type="entry name" value="RIBOSOME-RELEASING FACTOR 2, MITOCHONDRIAL"/>
    <property type="match status" value="1"/>
</dbReference>
<dbReference type="PANTHER" id="PTHR43261">
    <property type="entry name" value="TRANSLATION ELONGATION FACTOR G-RELATED"/>
    <property type="match status" value="1"/>
</dbReference>
<dbReference type="Pfam" id="PF00679">
    <property type="entry name" value="EFG_C"/>
    <property type="match status" value="1"/>
</dbReference>
<dbReference type="Pfam" id="PF14492">
    <property type="entry name" value="EFG_III"/>
    <property type="match status" value="1"/>
</dbReference>
<dbReference type="Pfam" id="PF03764">
    <property type="entry name" value="EFG_IV"/>
    <property type="match status" value="1"/>
</dbReference>
<dbReference type="Pfam" id="PF00009">
    <property type="entry name" value="GTP_EFTU"/>
    <property type="match status" value="1"/>
</dbReference>
<dbReference type="Pfam" id="PF03144">
    <property type="entry name" value="GTP_EFTU_D2"/>
    <property type="match status" value="1"/>
</dbReference>
<dbReference type="PRINTS" id="PR00315">
    <property type="entry name" value="ELONGATNFCT"/>
</dbReference>
<dbReference type="SMART" id="SM00838">
    <property type="entry name" value="EFG_C"/>
    <property type="match status" value="1"/>
</dbReference>
<dbReference type="SMART" id="SM00889">
    <property type="entry name" value="EFG_IV"/>
    <property type="match status" value="1"/>
</dbReference>
<dbReference type="SUPFAM" id="SSF54980">
    <property type="entry name" value="EF-G C-terminal domain-like"/>
    <property type="match status" value="2"/>
</dbReference>
<dbReference type="SUPFAM" id="SSF52540">
    <property type="entry name" value="P-loop containing nucleoside triphosphate hydrolases"/>
    <property type="match status" value="1"/>
</dbReference>
<dbReference type="SUPFAM" id="SSF54211">
    <property type="entry name" value="Ribosomal protein S5 domain 2-like"/>
    <property type="match status" value="1"/>
</dbReference>
<dbReference type="SUPFAM" id="SSF50447">
    <property type="entry name" value="Translation proteins"/>
    <property type="match status" value="1"/>
</dbReference>
<dbReference type="PROSITE" id="PS00301">
    <property type="entry name" value="G_TR_1"/>
    <property type="match status" value="1"/>
</dbReference>
<dbReference type="PROSITE" id="PS51722">
    <property type="entry name" value="G_TR_2"/>
    <property type="match status" value="1"/>
</dbReference>
<accession>B1X6J0</accession>
<protein>
    <recommendedName>
        <fullName evidence="2">Elongation factor G</fullName>
        <shortName evidence="2">EF-G</shortName>
    </recommendedName>
</protein>
<gene>
    <name evidence="2" type="primary">fusA</name>
    <name type="ordered locus">ECDH10B_3515</name>
</gene>
<sequence length="704" mass="77581">MARTTPIARYRNIGISAHIDAGKTTTTERILFYTGVNHKIGEVHDGAATMDWMEQEQERGITITSAATTAFWSGMAKQYEPHRINIIDTPGHVDFTIEVERSMRVLDGAVMVYCAVGGVQPQSETVWRQANKYKVPRIAFVNKMDRMGANFLKVVNQIKTRLGANPVPLQLAIGAEEHFTGVVDLVKMKAINWNDADQGVTFEYEDIPADMVELANEWHQNLIESAAEASEELMEKYLGGEELTEAEIKGALRQRVLNNEIILVTCGSAFKNKGVQAMLDAVIDYLPSPVDVPAINGILDDGKDTPAERHASDDEPFSALAFKIATDPFVGNLTFFRVYSGVVNSGDTVLNSVKAARERFGRIVQMHANKREEIKEVRAGDIAAAIGLKDVTTGDTLCDPDAPIILERMEFPEPVISIAVEPKTKADQEKMGLALGRLAKEDPSFRVWTDEESNQTIIAGMGELHLDIIVDRMKREFNVEANVGKPQVAYRETIRQKVTDVEGKHAKQSGGRGQYGHVVIDMYPLEPGSNPKGYEFINDIKGGVIPGEYIPAVDKGIQEQLKAGPLAGYPVVDMGIRLHFGSYHDVDSSELAFKLAASIAFKEGFKKAKPVLLEPIMKVEVETPEENTGDVIGDLSRRRGMLKGQESEVTGVKIHAEVPLSEMFGYATQLRSLTKGRASYTMEFLKYDEAPSNVAQAVIEARGK</sequence>